<sequence>MATAGGSRRAPVPGPRLGLPLAAHLPASLGGEGAKDSVGGEKTSGNNDWFQSSRVPSFAQMLKKNLPVQPSAQTVTLPTGYSSESCSLSNMASKVTQVTGNFPEPLLSKGLSSISNPVLPPKKLPKEFIMKYKRGEINPVSALHQFAQMQRVQLDLKETVTTGNVMGPYFAFCAVVDGIQYKTGLGQNKKESRSNAAKLALDELLQLDEPEPRVLEPAGPPPIPAEPVVTPEAAYVSKVQYEGRQVQYAKISQLVKETFGQLISNHSQYLKCSSSLAAFIIERAGHHEVVAIGTGEYNYSQCIKPNGRVLHDTHAVVTARRSLLRYFYRQLLLFYSKNPAMMEKSIFCTEPASNLLTLKQNINLYLYMNQLPKGSAQIKSQLRLNPHSISAFEANEELSLHVAVEGKIYLTVYCSADGVNRVNSMSSSDKLTRWEVLGVQGALLSHFIQPVYISSILVGDGNCNDTRGLEIAINQRVDDALTSKLPMFYLVNRPHISLVPTAYPLQINLDHKSLSLNWAQGDNSLEIVDGLNGKITESSPFKSGLSMASRLCKAAMLSRFNLLAKEAKTDDLLEARTYHAAKCMSGPYQEAKALLKAYLQQHGYGSWIVKSPCIEQFSM</sequence>
<keyword id="KW-0025">Alternative splicing</keyword>
<keyword id="KW-0217">Developmental protein</keyword>
<keyword id="KW-0221">Differentiation</keyword>
<keyword id="KW-0539">Nucleus</keyword>
<keyword id="KW-1185">Reference proteome</keyword>
<keyword id="KW-0694">RNA-binding</keyword>
<keyword id="KW-0744">Spermatogenesis</keyword>
<evidence type="ECO:0000255" key="1">
    <source>
        <dbReference type="PROSITE-ProRule" id="PRU00240"/>
    </source>
</evidence>
<evidence type="ECO:0000255" key="2">
    <source>
        <dbReference type="PROSITE-ProRule" id="PRU00266"/>
    </source>
</evidence>
<evidence type="ECO:0000256" key="3">
    <source>
        <dbReference type="SAM" id="MobiDB-lite"/>
    </source>
</evidence>
<evidence type="ECO:0000269" key="4">
    <source>
    </source>
</evidence>
<evidence type="ECO:0000269" key="5">
    <source>
    </source>
</evidence>
<evidence type="ECO:0000269" key="6">
    <source>
    </source>
</evidence>
<evidence type="ECO:0000303" key="7">
    <source>
    </source>
</evidence>
<evidence type="ECO:0000303" key="8">
    <source>
    </source>
</evidence>
<evidence type="ECO:0000305" key="9"/>
<dbReference type="EMBL" id="X84693">
    <property type="protein sequence ID" value="CAA59168.1"/>
    <property type="molecule type" value="mRNA"/>
</dbReference>
<dbReference type="EMBL" id="AL645753">
    <property type="protein sequence ID" value="CAM28065.1"/>
    <property type="molecule type" value="Genomic_DNA"/>
</dbReference>
<dbReference type="EMBL" id="AL645753">
    <property type="protein sequence ID" value="CAM28066.1"/>
    <property type="molecule type" value="Genomic_DNA"/>
</dbReference>
<dbReference type="EMBL" id="AL645807">
    <property type="protein sequence ID" value="CAM28072.1"/>
    <property type="status" value="ALT_SEQ"/>
    <property type="molecule type" value="Genomic_DNA"/>
</dbReference>
<dbReference type="EMBL" id="AL645966">
    <property type="protein sequence ID" value="CAI26206.1"/>
    <property type="molecule type" value="Genomic_DNA"/>
</dbReference>
<dbReference type="EMBL" id="AL645966">
    <property type="protein sequence ID" value="CAM28078.1"/>
    <property type="status" value="ALT_SEQ"/>
    <property type="molecule type" value="Genomic_DNA"/>
</dbReference>
<dbReference type="EMBL" id="AL662823">
    <property type="protein sequence ID" value="CAM18412.1"/>
    <property type="molecule type" value="Genomic_DNA"/>
</dbReference>
<dbReference type="EMBL" id="AL662823">
    <property type="protein sequence ID" value="CAM18414.1"/>
    <property type="status" value="ALT_SEQ"/>
    <property type="molecule type" value="Genomic_DNA"/>
</dbReference>
<dbReference type="EMBL" id="BC107346">
    <property type="protein sequence ID" value="AAI07347.1"/>
    <property type="molecule type" value="mRNA"/>
</dbReference>
<dbReference type="EMBL" id="AK133008">
    <property type="protein sequence ID" value="BAE21467.1"/>
    <property type="molecule type" value="mRNA"/>
</dbReference>
<dbReference type="EMBL" id="AV255684">
    <property type="status" value="NOT_ANNOTATED_CDS"/>
    <property type="molecule type" value="mRNA"/>
</dbReference>
<dbReference type="EMBL" id="AF195956">
    <property type="protein sequence ID" value="AAF32273.1"/>
    <property type="molecule type" value="Genomic_DNA"/>
</dbReference>
<dbReference type="CCDS" id="CCDS17315.1">
    <molecule id="Q5SUE7-1"/>
</dbReference>
<dbReference type="PIR" id="I48840">
    <property type="entry name" value="I48840"/>
</dbReference>
<dbReference type="RefSeq" id="NP_033376.2">
    <molecule id="Q5SUE7-1"/>
    <property type="nucleotide sequence ID" value="NM_009350.3"/>
</dbReference>
<dbReference type="RefSeq" id="XP_006535498.1">
    <property type="nucleotide sequence ID" value="XM_006535435.1"/>
</dbReference>
<dbReference type="SMR" id="Q5SUE7"/>
<dbReference type="FunCoup" id="Q5SUE7">
    <property type="interactions" value="510"/>
</dbReference>
<dbReference type="IntAct" id="Q5SUE7">
    <property type="interactions" value="1"/>
</dbReference>
<dbReference type="MINT" id="Q5SUE7"/>
<dbReference type="STRING" id="10090.ENSMUSP00000115260"/>
<dbReference type="iPTMnet" id="Q5SUE7"/>
<dbReference type="PhosphoSitePlus" id="Q5SUE7"/>
<dbReference type="SwissPalm" id="Q5SUE7"/>
<dbReference type="PaxDb" id="10090-ENSMUSP00000115260"/>
<dbReference type="ProteomicsDB" id="285668">
    <molecule id="Q5SUE7-1"/>
</dbReference>
<dbReference type="ProteomicsDB" id="285669">
    <molecule id="Q5SUE7-2"/>
</dbReference>
<dbReference type="ProteomicsDB" id="285670">
    <molecule id="Q5SUE7-3"/>
</dbReference>
<dbReference type="Antibodypedia" id="26838">
    <property type="antibodies" value="64 antibodies from 16 providers"/>
</dbReference>
<dbReference type="DNASU" id="21744"/>
<dbReference type="Ensembl" id="ENSMUST00000144629.8">
    <molecule id="Q5SUE7-1"/>
    <property type="protein sequence ID" value="ENSMUSP00000115260.2"/>
    <property type="gene ID" value="ENSMUSG00000027719.16"/>
</dbReference>
<dbReference type="GeneID" id="21744"/>
<dbReference type="KEGG" id="mmu:21744"/>
<dbReference type="UCSC" id="uc008pag.1">
    <molecule id="Q5SUE7-2"/>
    <property type="organism name" value="mouse"/>
</dbReference>
<dbReference type="UCSC" id="uc008pah.1">
    <molecule id="Q5SUE7-1"/>
    <property type="organism name" value="mouse"/>
</dbReference>
<dbReference type="AGR" id="MGI:103258"/>
<dbReference type="CTD" id="132612"/>
<dbReference type="MGI" id="MGI:103258">
    <property type="gene designation" value="Adad1"/>
</dbReference>
<dbReference type="VEuPathDB" id="HostDB:ENSMUSG00000027719"/>
<dbReference type="eggNOG" id="KOG2777">
    <property type="taxonomic scope" value="Eukaryota"/>
</dbReference>
<dbReference type="GeneTree" id="ENSGT00940000156842"/>
<dbReference type="InParanoid" id="Q5SUE7"/>
<dbReference type="OMA" id="GNCKDTR"/>
<dbReference type="OrthoDB" id="10268011at2759"/>
<dbReference type="PhylomeDB" id="Q5SUE7"/>
<dbReference type="TreeFam" id="TF315806"/>
<dbReference type="BioGRID-ORCS" id="21744">
    <property type="hits" value="2 hits in 77 CRISPR screens"/>
</dbReference>
<dbReference type="CD-CODE" id="DE1E139C">
    <property type="entry name" value="Chromatoid body"/>
</dbReference>
<dbReference type="ChiTaRS" id="Adad1">
    <property type="organism name" value="mouse"/>
</dbReference>
<dbReference type="PRO" id="PR:Q5SUE7"/>
<dbReference type="Proteomes" id="UP000000589">
    <property type="component" value="Chromosome 3"/>
</dbReference>
<dbReference type="RNAct" id="Q5SUE7">
    <property type="molecule type" value="protein"/>
</dbReference>
<dbReference type="Bgee" id="ENSMUSG00000027719">
    <property type="expression patterns" value="Expressed in seminiferous tubule of testis and 34 other cell types or tissues"/>
</dbReference>
<dbReference type="ExpressionAtlas" id="Q5SUE7">
    <property type="expression patterns" value="baseline and differential"/>
</dbReference>
<dbReference type="GO" id="GO:0001673">
    <property type="term" value="C:male germ cell nucleus"/>
    <property type="evidence" value="ECO:0000314"/>
    <property type="project" value="MGI"/>
</dbReference>
<dbReference type="GO" id="GO:0004000">
    <property type="term" value="F:adenosine deaminase activity"/>
    <property type="evidence" value="ECO:0007669"/>
    <property type="project" value="InterPro"/>
</dbReference>
<dbReference type="GO" id="GO:0003723">
    <property type="term" value="F:RNA binding"/>
    <property type="evidence" value="ECO:0000314"/>
    <property type="project" value="MGI"/>
</dbReference>
<dbReference type="GO" id="GO:0006396">
    <property type="term" value="P:RNA processing"/>
    <property type="evidence" value="ECO:0007669"/>
    <property type="project" value="InterPro"/>
</dbReference>
<dbReference type="GO" id="GO:0007286">
    <property type="term" value="P:spermatid development"/>
    <property type="evidence" value="ECO:0000315"/>
    <property type="project" value="UniProtKB"/>
</dbReference>
<dbReference type="CDD" id="cd19905">
    <property type="entry name" value="DSRM_ADAD1"/>
    <property type="match status" value="1"/>
</dbReference>
<dbReference type="FunFam" id="3.30.160.20:FF:000033">
    <property type="entry name" value="Adenosine deaminase domain-containing 1 (testis-specific)"/>
    <property type="match status" value="1"/>
</dbReference>
<dbReference type="Gene3D" id="3.30.160.20">
    <property type="match status" value="1"/>
</dbReference>
<dbReference type="InterPro" id="IPR002466">
    <property type="entry name" value="A_deamin"/>
</dbReference>
<dbReference type="InterPro" id="IPR044455">
    <property type="entry name" value="ADAD1_DSRM"/>
</dbReference>
<dbReference type="InterPro" id="IPR014720">
    <property type="entry name" value="dsRBD_dom"/>
</dbReference>
<dbReference type="PANTHER" id="PTHR10910:SF103">
    <property type="entry name" value="ADENOSINE DEAMINASE DOMAIN-CONTAINING PROTEIN 1"/>
    <property type="match status" value="1"/>
</dbReference>
<dbReference type="PANTHER" id="PTHR10910">
    <property type="entry name" value="EUKARYOTE SPECIFIC DSRNA BINDING PROTEIN"/>
    <property type="match status" value="1"/>
</dbReference>
<dbReference type="Pfam" id="PF02137">
    <property type="entry name" value="A_deamin"/>
    <property type="match status" value="1"/>
</dbReference>
<dbReference type="Pfam" id="PF00035">
    <property type="entry name" value="dsrm"/>
    <property type="match status" value="1"/>
</dbReference>
<dbReference type="SMART" id="SM00552">
    <property type="entry name" value="ADEAMc"/>
    <property type="match status" value="1"/>
</dbReference>
<dbReference type="SMART" id="SM00358">
    <property type="entry name" value="DSRM"/>
    <property type="match status" value="1"/>
</dbReference>
<dbReference type="SUPFAM" id="SSF54768">
    <property type="entry name" value="dsRNA-binding domain-like"/>
    <property type="match status" value="1"/>
</dbReference>
<dbReference type="PROSITE" id="PS50141">
    <property type="entry name" value="A_DEAMIN_EDITASE"/>
    <property type="match status" value="1"/>
</dbReference>
<dbReference type="PROSITE" id="PS50137">
    <property type="entry name" value="DS_RBD"/>
    <property type="match status" value="1"/>
</dbReference>
<name>ADAD1_MOUSE</name>
<accession>Q5SUE7</accession>
<accession>A2AAD7</accession>
<accession>A2AAD8</accession>
<accession>A2AAV1</accession>
<accession>Q08EL2</accession>
<accession>Q3V0N7</accession>
<accession>Q62309</accession>
<accession>Q9JLB6</accession>
<comment type="function">
    <text evidence="4 5">Required for male fertility and normal male germ cell differentiation (PubMed:32665638). Plays a role in spermatogenesis (PubMed:15649457). Binds to RNA but not to DNA (PubMed:15649457).</text>
</comment>
<comment type="subcellular location">
    <subcellularLocation>
        <location evidence="6">Nucleus</location>
    </subcellularLocation>
</comment>
<comment type="alternative products">
    <event type="alternative splicing"/>
    <isoform>
        <id>Q5SUE7-1</id>
        <name>1</name>
        <sequence type="displayed"/>
    </isoform>
    <isoform>
        <id>Q5SUE7-2</id>
        <name>2</name>
        <sequence type="described" ref="VSP_029227 VSP_029228"/>
    </isoform>
    <isoform>
        <id>Q5SUE7-3</id>
        <name>3</name>
        <sequence type="described" ref="VSP_029229"/>
    </isoform>
</comment>
<comment type="tissue specificity">
    <text evidence="5 6">Testis-specific. Detected in round spermatid cells from stage II-XI (at protein level). Expressed in germ cells from mid-pachytene spermatocytes to mid-round spermatids.</text>
</comment>
<comment type="disruption phenotype">
    <text evidence="4 5">Mice exhibit spermatozoa retention in stage IX tubules and a reduction in the number of sperm in the epididymis, leading to a reduction in fertility (PubMed:15649457). Show defects in germ-cell development (PubMed:32665638).</text>
</comment>
<comment type="similarity">
    <text evidence="9">Belongs to the ADAD family.</text>
</comment>
<comment type="sequence caution" evidence="9">
    <conflict type="erroneous gene model prediction">
        <sequence resource="EMBL-CDS" id="CAM18414"/>
    </conflict>
</comment>
<comment type="sequence caution" evidence="9">
    <conflict type="erroneous gene model prediction">
        <sequence resource="EMBL-CDS" id="CAM28072"/>
    </conflict>
</comment>
<comment type="sequence caution" evidence="9">
    <conflict type="erroneous gene model prediction">
        <sequence resource="EMBL-CDS" id="CAM28078"/>
    </conflict>
</comment>
<feature type="chain" id="PRO_0000309521" description="Adenosine deaminase domain-containing protein 1">
    <location>
        <begin position="1"/>
        <end position="619"/>
    </location>
</feature>
<feature type="domain" description="DRBM" evidence="2">
    <location>
        <begin position="138"/>
        <end position="206"/>
    </location>
</feature>
<feature type="domain" description="A to I editase" evidence="1">
    <location>
        <begin position="291"/>
        <end position="617"/>
    </location>
</feature>
<feature type="region of interest" description="Disordered" evidence="3">
    <location>
        <begin position="1"/>
        <end position="50"/>
    </location>
</feature>
<feature type="splice variant" id="VSP_029227" description="In isoform 2." evidence="7">
    <original>PPP</original>
    <variation>KGN</variation>
    <location>
        <begin position="220"/>
        <end position="222"/>
    </location>
</feature>
<feature type="splice variant" id="VSP_029228" description="In isoform 2." evidence="7">
    <location>
        <begin position="223"/>
        <end position="619"/>
    </location>
</feature>
<feature type="splice variant" id="VSP_029229" description="In isoform 3." evidence="8">
    <original>M</original>
    <variation>DKLRRKYFDKFMGWLFQI</variation>
    <location>
        <position position="619"/>
    </location>
</feature>
<feature type="sequence conflict" description="In Ref. 1; CAA59168." evidence="9" ref="1">
    <original>V</original>
    <variation>L</variation>
    <location>
        <position position="255"/>
    </location>
</feature>
<feature type="sequence conflict" description="In Ref. 1; CAA59168." evidence="9" ref="1">
    <original>I</original>
    <variation>Y</variation>
    <location>
        <position position="362"/>
    </location>
</feature>
<reference key="1">
    <citation type="journal article" date="1995" name="Biol. Reprod.">
        <title>Distribution of Tenr, an RNA-binding protein, in a lattice-like network within the spermatid nucleus in the mouse.</title>
        <authorList>
            <person name="Schumacher J.M."/>
            <person name="Lee K."/>
            <person name="Edelhoff S."/>
            <person name="Braun R.E."/>
        </authorList>
    </citation>
    <scope>NUCLEOTIDE SEQUENCE [MRNA] (ISOFORM 1)</scope>
    <scope>RNA-BINDING</scope>
    <scope>SUBCELLULAR LOCATION</scope>
    <scope>TISSUE SPECIFICITY</scope>
    <source>
        <strain>CD-1</strain>
        <tissue>Testis</tissue>
    </source>
</reference>
<reference key="2">
    <citation type="journal article" date="2009" name="PLoS Biol.">
        <title>Lineage-specific biology revealed by a finished genome assembly of the mouse.</title>
        <authorList>
            <person name="Church D.M."/>
            <person name="Goodstadt L."/>
            <person name="Hillier L.W."/>
            <person name="Zody M.C."/>
            <person name="Goldstein S."/>
            <person name="She X."/>
            <person name="Bult C.J."/>
            <person name="Agarwala R."/>
            <person name="Cherry J.L."/>
            <person name="DiCuccio M."/>
            <person name="Hlavina W."/>
            <person name="Kapustin Y."/>
            <person name="Meric P."/>
            <person name="Maglott D."/>
            <person name="Birtle Z."/>
            <person name="Marques A.C."/>
            <person name="Graves T."/>
            <person name="Zhou S."/>
            <person name="Teague B."/>
            <person name="Potamousis K."/>
            <person name="Churas C."/>
            <person name="Place M."/>
            <person name="Herschleb J."/>
            <person name="Runnheim R."/>
            <person name="Forrest D."/>
            <person name="Amos-Landgraf J."/>
            <person name="Schwartz D.C."/>
            <person name="Cheng Z."/>
            <person name="Lindblad-Toh K."/>
            <person name="Eichler E.E."/>
            <person name="Ponting C.P."/>
        </authorList>
    </citation>
    <scope>NUCLEOTIDE SEQUENCE [LARGE SCALE GENOMIC DNA]</scope>
    <source>
        <strain>C57BL/6J</strain>
    </source>
</reference>
<reference key="3">
    <citation type="journal article" date="2004" name="Genome Res.">
        <title>The status, quality, and expansion of the NIH full-length cDNA project: the Mammalian Gene Collection (MGC).</title>
        <authorList>
            <consortium name="The MGC Project Team"/>
        </authorList>
    </citation>
    <scope>NUCLEOTIDE SEQUENCE [LARGE SCALE MRNA] (ISOFORM 2)</scope>
</reference>
<reference key="4">
    <citation type="journal article" date="2005" name="Science">
        <title>The transcriptional landscape of the mammalian genome.</title>
        <authorList>
            <person name="Carninci P."/>
            <person name="Kasukawa T."/>
            <person name="Katayama S."/>
            <person name="Gough J."/>
            <person name="Frith M.C."/>
            <person name="Maeda N."/>
            <person name="Oyama R."/>
            <person name="Ravasi T."/>
            <person name="Lenhard B."/>
            <person name="Wells C."/>
            <person name="Kodzius R."/>
            <person name="Shimokawa K."/>
            <person name="Bajic V.B."/>
            <person name="Brenner S.E."/>
            <person name="Batalov S."/>
            <person name="Forrest A.R."/>
            <person name="Zavolan M."/>
            <person name="Davis M.J."/>
            <person name="Wilming L.G."/>
            <person name="Aidinis V."/>
            <person name="Allen J.E."/>
            <person name="Ambesi-Impiombato A."/>
            <person name="Apweiler R."/>
            <person name="Aturaliya R.N."/>
            <person name="Bailey T.L."/>
            <person name="Bansal M."/>
            <person name="Baxter L."/>
            <person name="Beisel K.W."/>
            <person name="Bersano T."/>
            <person name="Bono H."/>
            <person name="Chalk A.M."/>
            <person name="Chiu K.P."/>
            <person name="Choudhary V."/>
            <person name="Christoffels A."/>
            <person name="Clutterbuck D.R."/>
            <person name="Crowe M.L."/>
            <person name="Dalla E."/>
            <person name="Dalrymple B.P."/>
            <person name="de Bono B."/>
            <person name="Della Gatta G."/>
            <person name="di Bernardo D."/>
            <person name="Down T."/>
            <person name="Engstrom P."/>
            <person name="Fagiolini M."/>
            <person name="Faulkner G."/>
            <person name="Fletcher C.F."/>
            <person name="Fukushima T."/>
            <person name="Furuno M."/>
            <person name="Futaki S."/>
            <person name="Gariboldi M."/>
            <person name="Georgii-Hemming P."/>
            <person name="Gingeras T.R."/>
            <person name="Gojobori T."/>
            <person name="Green R.E."/>
            <person name="Gustincich S."/>
            <person name="Harbers M."/>
            <person name="Hayashi Y."/>
            <person name="Hensch T.K."/>
            <person name="Hirokawa N."/>
            <person name="Hill D."/>
            <person name="Huminiecki L."/>
            <person name="Iacono M."/>
            <person name="Ikeo K."/>
            <person name="Iwama A."/>
            <person name="Ishikawa T."/>
            <person name="Jakt M."/>
            <person name="Kanapin A."/>
            <person name="Katoh M."/>
            <person name="Kawasawa Y."/>
            <person name="Kelso J."/>
            <person name="Kitamura H."/>
            <person name="Kitano H."/>
            <person name="Kollias G."/>
            <person name="Krishnan S.P."/>
            <person name="Kruger A."/>
            <person name="Kummerfeld S.K."/>
            <person name="Kurochkin I.V."/>
            <person name="Lareau L.F."/>
            <person name="Lazarevic D."/>
            <person name="Lipovich L."/>
            <person name="Liu J."/>
            <person name="Liuni S."/>
            <person name="McWilliam S."/>
            <person name="Madan Babu M."/>
            <person name="Madera M."/>
            <person name="Marchionni L."/>
            <person name="Matsuda H."/>
            <person name="Matsuzawa S."/>
            <person name="Miki H."/>
            <person name="Mignone F."/>
            <person name="Miyake S."/>
            <person name="Morris K."/>
            <person name="Mottagui-Tabar S."/>
            <person name="Mulder N."/>
            <person name="Nakano N."/>
            <person name="Nakauchi H."/>
            <person name="Ng P."/>
            <person name="Nilsson R."/>
            <person name="Nishiguchi S."/>
            <person name="Nishikawa S."/>
            <person name="Nori F."/>
            <person name="Ohara O."/>
            <person name="Okazaki Y."/>
            <person name="Orlando V."/>
            <person name="Pang K.C."/>
            <person name="Pavan W.J."/>
            <person name="Pavesi G."/>
            <person name="Pesole G."/>
            <person name="Petrovsky N."/>
            <person name="Piazza S."/>
            <person name="Reed J."/>
            <person name="Reid J.F."/>
            <person name="Ring B.Z."/>
            <person name="Ringwald M."/>
            <person name="Rost B."/>
            <person name="Ruan Y."/>
            <person name="Salzberg S.L."/>
            <person name="Sandelin A."/>
            <person name="Schneider C."/>
            <person name="Schoenbach C."/>
            <person name="Sekiguchi K."/>
            <person name="Semple C.A."/>
            <person name="Seno S."/>
            <person name="Sessa L."/>
            <person name="Sheng Y."/>
            <person name="Shibata Y."/>
            <person name="Shimada H."/>
            <person name="Shimada K."/>
            <person name="Silva D."/>
            <person name="Sinclair B."/>
            <person name="Sperling S."/>
            <person name="Stupka E."/>
            <person name="Sugiura K."/>
            <person name="Sultana R."/>
            <person name="Takenaka Y."/>
            <person name="Taki K."/>
            <person name="Tammoja K."/>
            <person name="Tan S.L."/>
            <person name="Tang S."/>
            <person name="Taylor M.S."/>
            <person name="Tegner J."/>
            <person name="Teichmann S.A."/>
            <person name="Ueda H.R."/>
            <person name="van Nimwegen E."/>
            <person name="Verardo R."/>
            <person name="Wei C.L."/>
            <person name="Yagi K."/>
            <person name="Yamanishi H."/>
            <person name="Zabarovsky E."/>
            <person name="Zhu S."/>
            <person name="Zimmer A."/>
            <person name="Hide W."/>
            <person name="Bult C."/>
            <person name="Grimmond S.M."/>
            <person name="Teasdale R.D."/>
            <person name="Liu E.T."/>
            <person name="Brusic V."/>
            <person name="Quackenbush J."/>
            <person name="Wahlestedt C."/>
            <person name="Mattick J.S."/>
            <person name="Hume D.A."/>
            <person name="Kai C."/>
            <person name="Sasaki D."/>
            <person name="Tomaru Y."/>
            <person name="Fukuda S."/>
            <person name="Kanamori-Katayama M."/>
            <person name="Suzuki M."/>
            <person name="Aoki J."/>
            <person name="Arakawa T."/>
            <person name="Iida J."/>
            <person name="Imamura K."/>
            <person name="Itoh M."/>
            <person name="Kato T."/>
            <person name="Kawaji H."/>
            <person name="Kawagashira N."/>
            <person name="Kawashima T."/>
            <person name="Kojima M."/>
            <person name="Kondo S."/>
            <person name="Konno H."/>
            <person name="Nakano K."/>
            <person name="Ninomiya N."/>
            <person name="Nishio T."/>
            <person name="Okada M."/>
            <person name="Plessy C."/>
            <person name="Shibata K."/>
            <person name="Shiraki T."/>
            <person name="Suzuki S."/>
            <person name="Tagami M."/>
            <person name="Waki K."/>
            <person name="Watahiki A."/>
            <person name="Okamura-Oho Y."/>
            <person name="Suzuki H."/>
            <person name="Kawai J."/>
            <person name="Hayashizaki Y."/>
        </authorList>
    </citation>
    <scope>NUCLEOTIDE SEQUENCE [LARGE SCALE MRNA] OF 174-619 (ISOFORM 1)</scope>
    <scope>NUCLEOTIDE SEQUENCE [LARGE SCALE MRNA] OF 438-619 (ISOFORM 3)</scope>
    <source>
        <strain>C57BL/6J</strain>
        <tissue>Testis</tissue>
    </source>
</reference>
<reference key="5">
    <citation type="journal article" date="2000" name="Genome Res.">
        <title>Congenic mapping of the type 1 diabetes locus, Idd3, to a 780-kb region of mouse chromosome 3: identification of a candidate segment of ancestral DNA by haplotype mapping.</title>
        <authorList>
            <person name="Lyons P.A."/>
            <person name="Armitage N."/>
            <person name="Argentina F."/>
            <person name="Denny P."/>
            <person name="Hill N.J."/>
            <person name="Lord C.J."/>
            <person name="Wilusz M.B."/>
            <person name="Peterson L.B."/>
            <person name="Wicker L.S."/>
            <person name="Todd J.A."/>
        </authorList>
    </citation>
    <scope>NUCLEOTIDE SEQUENCE [GENOMIC DNA] OF 539-619 (ISOFORM 1)</scope>
    <source>
        <strain>C57BL/6J</strain>
    </source>
</reference>
<reference key="6">
    <citation type="journal article" date="2005" name="Dev. Biol.">
        <title>Disruption of murine Tenr results in teratospermia and male infertility.</title>
        <authorList>
            <person name="Connolly C.M."/>
            <person name="Dearth A.T."/>
            <person name="Braun R.E."/>
        </authorList>
    </citation>
    <scope>FUNCTION</scope>
    <scope>DISRUPTION PHENOTYPE</scope>
</reference>
<reference key="7">
    <citation type="journal article" date="2010" name="Cell">
        <title>A tissue-specific atlas of mouse protein phosphorylation and expression.</title>
        <authorList>
            <person name="Huttlin E.L."/>
            <person name="Jedrychowski M.P."/>
            <person name="Elias J.E."/>
            <person name="Goswami T."/>
            <person name="Rad R."/>
            <person name="Beausoleil S.A."/>
            <person name="Villen J."/>
            <person name="Haas W."/>
            <person name="Sowa M.E."/>
            <person name="Gygi S.P."/>
        </authorList>
    </citation>
    <scope>IDENTIFICATION BY MASS SPECTROMETRY [LARGE SCALE ANALYSIS]</scope>
    <source>
        <tissue>Testis</tissue>
    </source>
</reference>
<reference key="8">
    <citation type="journal article" date="2020" name="Sci. Rep.">
        <title>ADAD1 and ADAD2, testis-specific adenosine deaminase domain-containing proteins, are required for male fertility.</title>
        <authorList>
            <person name="Snyder E."/>
            <person name="Chukrallah L."/>
            <person name="Seltzer K."/>
            <person name="Goodwin L."/>
            <person name="Braun R.E."/>
        </authorList>
    </citation>
    <scope>FUNCTION</scope>
    <scope>DISRUPTION PHENOTYPE</scope>
    <scope>TISSUE SPECIFICITY</scope>
</reference>
<organism>
    <name type="scientific">Mus musculus</name>
    <name type="common">Mouse</name>
    <dbReference type="NCBI Taxonomy" id="10090"/>
    <lineage>
        <taxon>Eukaryota</taxon>
        <taxon>Metazoa</taxon>
        <taxon>Chordata</taxon>
        <taxon>Craniata</taxon>
        <taxon>Vertebrata</taxon>
        <taxon>Euteleostomi</taxon>
        <taxon>Mammalia</taxon>
        <taxon>Eutheria</taxon>
        <taxon>Euarchontoglires</taxon>
        <taxon>Glires</taxon>
        <taxon>Rodentia</taxon>
        <taxon>Myomorpha</taxon>
        <taxon>Muroidea</taxon>
        <taxon>Muridae</taxon>
        <taxon>Murinae</taxon>
        <taxon>Mus</taxon>
        <taxon>Mus</taxon>
    </lineage>
</organism>
<gene>
    <name type="primary">Adad1</name>
    <name type="synonym">Tenr</name>
</gene>
<proteinExistence type="evidence at protein level"/>
<protein>
    <recommendedName>
        <fullName>Adenosine deaminase domain-containing protein 1</fullName>
    </recommendedName>
    <alternativeName>
        <fullName>Testis nuclear RNA-binding protein</fullName>
    </alternativeName>
</protein>